<proteinExistence type="inferred from homology"/>
<dbReference type="EMBL" id="CP001357">
    <property type="protein sequence ID" value="ACN82522.1"/>
    <property type="molecule type" value="Genomic_DNA"/>
</dbReference>
<dbReference type="RefSeq" id="WP_008727916.1">
    <property type="nucleotide sequence ID" value="NC_012225.1"/>
</dbReference>
<dbReference type="SMR" id="C0QVU4"/>
<dbReference type="STRING" id="565034.BHWA1_00019"/>
<dbReference type="GeneID" id="63963813"/>
<dbReference type="KEGG" id="bhy:BHWA1_00019"/>
<dbReference type="eggNOG" id="COG1551">
    <property type="taxonomic scope" value="Bacteria"/>
</dbReference>
<dbReference type="HOGENOM" id="CLU_164837_0_1_12"/>
<dbReference type="Proteomes" id="UP000001803">
    <property type="component" value="Chromosome"/>
</dbReference>
<dbReference type="GO" id="GO:0005829">
    <property type="term" value="C:cytosol"/>
    <property type="evidence" value="ECO:0007669"/>
    <property type="project" value="TreeGrafter"/>
</dbReference>
<dbReference type="GO" id="GO:0048027">
    <property type="term" value="F:mRNA 5'-UTR binding"/>
    <property type="evidence" value="ECO:0007669"/>
    <property type="project" value="UniProtKB-UniRule"/>
</dbReference>
<dbReference type="GO" id="GO:0044781">
    <property type="term" value="P:bacterial-type flagellum organization"/>
    <property type="evidence" value="ECO:0007669"/>
    <property type="project" value="UniProtKB-KW"/>
</dbReference>
<dbReference type="GO" id="GO:0006402">
    <property type="term" value="P:mRNA catabolic process"/>
    <property type="evidence" value="ECO:0007669"/>
    <property type="project" value="InterPro"/>
</dbReference>
<dbReference type="GO" id="GO:0045947">
    <property type="term" value="P:negative regulation of translational initiation"/>
    <property type="evidence" value="ECO:0007669"/>
    <property type="project" value="UniProtKB-UniRule"/>
</dbReference>
<dbReference type="GO" id="GO:1902208">
    <property type="term" value="P:regulation of bacterial-type flagellum assembly"/>
    <property type="evidence" value="ECO:0007669"/>
    <property type="project" value="UniProtKB-UniRule"/>
</dbReference>
<dbReference type="GO" id="GO:0006109">
    <property type="term" value="P:regulation of carbohydrate metabolic process"/>
    <property type="evidence" value="ECO:0007669"/>
    <property type="project" value="InterPro"/>
</dbReference>
<dbReference type="FunFam" id="2.60.40.4380:FF:000002">
    <property type="entry name" value="Translational regulator CsrA"/>
    <property type="match status" value="1"/>
</dbReference>
<dbReference type="Gene3D" id="2.60.40.4380">
    <property type="entry name" value="Translational regulator CsrA"/>
    <property type="match status" value="1"/>
</dbReference>
<dbReference type="HAMAP" id="MF_00167">
    <property type="entry name" value="CsrA"/>
    <property type="match status" value="1"/>
</dbReference>
<dbReference type="InterPro" id="IPR003751">
    <property type="entry name" value="CsrA"/>
</dbReference>
<dbReference type="InterPro" id="IPR036107">
    <property type="entry name" value="CsrA_sf"/>
</dbReference>
<dbReference type="NCBIfam" id="TIGR00202">
    <property type="entry name" value="csrA"/>
    <property type="match status" value="1"/>
</dbReference>
<dbReference type="NCBIfam" id="NF002469">
    <property type="entry name" value="PRK01712.1"/>
    <property type="match status" value="1"/>
</dbReference>
<dbReference type="PANTHER" id="PTHR34984">
    <property type="entry name" value="CARBON STORAGE REGULATOR"/>
    <property type="match status" value="1"/>
</dbReference>
<dbReference type="PANTHER" id="PTHR34984:SF1">
    <property type="entry name" value="CARBON STORAGE REGULATOR"/>
    <property type="match status" value="1"/>
</dbReference>
<dbReference type="Pfam" id="PF02599">
    <property type="entry name" value="CsrA"/>
    <property type="match status" value="1"/>
</dbReference>
<dbReference type="SUPFAM" id="SSF117130">
    <property type="entry name" value="CsrA-like"/>
    <property type="match status" value="1"/>
</dbReference>
<sequence length="82" mass="9331">MLVLSRKINQSIVIGDNIEIMLVDIRGDQIKLGINAPKNVKIFRKEVYEEIESQNLEASKEATADKLNILSNFVKNKFGKKQ</sequence>
<comment type="function">
    <text evidence="1">A translational regulator that binds mRNA to regulate translation initiation and/or mRNA stability. Usually binds in the 5'-UTR at or near the Shine-Dalgarno sequence preventing ribosome-binding, thus repressing translation. Its main target seems to be the major flagellin gene, while its function is anatagonized by FliW.</text>
</comment>
<comment type="subunit">
    <text evidence="1">Homodimer; the beta-strands of each monomer intercalate to form a hydrophobic core, while the alpha-helices form wings that extend away from the core.</text>
</comment>
<comment type="subcellular location">
    <subcellularLocation>
        <location evidence="1">Cytoplasm</location>
    </subcellularLocation>
</comment>
<comment type="similarity">
    <text evidence="1">Belongs to the CsrA/RsmA family.</text>
</comment>
<name>CSRA_BRAHW</name>
<reference key="1">
    <citation type="journal article" date="2009" name="PLoS ONE">
        <title>Genome sequence of the pathogenic intestinal spirochete Brachyspira hyodysenteriae reveals adaptations to its lifestyle in the porcine large intestine.</title>
        <authorList>
            <person name="Bellgard M.I."/>
            <person name="Wanchanthuek P."/>
            <person name="La T."/>
            <person name="Ryan K."/>
            <person name="Moolhuijzen P."/>
            <person name="Albertyn Z."/>
            <person name="Shaban B."/>
            <person name="Motro Y."/>
            <person name="Dunn D.S."/>
            <person name="Schibeci D."/>
            <person name="Hunter A."/>
            <person name="Barrero R."/>
            <person name="Phillips N.D."/>
            <person name="Hampson D.J."/>
        </authorList>
    </citation>
    <scope>NUCLEOTIDE SEQUENCE [LARGE SCALE GENOMIC DNA]</scope>
    <source>
        <strain>ATCC 49526 / WA1</strain>
    </source>
</reference>
<accession>C0QVU4</accession>
<gene>
    <name evidence="1" type="primary">csrA</name>
    <name type="ordered locus">BHWA1_00019</name>
</gene>
<feature type="chain" id="PRO_1000123616" description="Translational regulator CsrA">
    <location>
        <begin position="1"/>
        <end position="82"/>
    </location>
</feature>
<keyword id="KW-1005">Bacterial flagellum biogenesis</keyword>
<keyword id="KW-0963">Cytoplasm</keyword>
<keyword id="KW-0678">Repressor</keyword>
<keyword id="KW-0694">RNA-binding</keyword>
<keyword id="KW-0810">Translation regulation</keyword>
<evidence type="ECO:0000255" key="1">
    <source>
        <dbReference type="HAMAP-Rule" id="MF_00167"/>
    </source>
</evidence>
<organism>
    <name type="scientific">Brachyspira hyodysenteriae (strain ATCC 49526 / WA1)</name>
    <dbReference type="NCBI Taxonomy" id="565034"/>
    <lineage>
        <taxon>Bacteria</taxon>
        <taxon>Pseudomonadati</taxon>
        <taxon>Spirochaetota</taxon>
        <taxon>Spirochaetia</taxon>
        <taxon>Brachyspirales</taxon>
        <taxon>Brachyspiraceae</taxon>
        <taxon>Brachyspira</taxon>
    </lineage>
</organism>
<protein>
    <recommendedName>
        <fullName evidence="1">Translational regulator CsrA</fullName>
    </recommendedName>
</protein>